<protein>
    <recommendedName>
        <fullName evidence="1">Adenine phosphoribosyltransferase</fullName>
        <shortName evidence="1">APRT</shortName>
        <ecNumber evidence="1">2.4.2.7</ecNumber>
    </recommendedName>
</protein>
<accession>A1JNC2</accession>
<feature type="chain" id="PRO_1000000374" description="Adenine phosphoribosyltransferase">
    <location>
        <begin position="1"/>
        <end position="187"/>
    </location>
</feature>
<gene>
    <name evidence="1" type="primary">apt</name>
    <name type="ordered locus">YE3094</name>
</gene>
<reference key="1">
    <citation type="journal article" date="2006" name="PLoS Genet.">
        <title>The complete genome sequence and comparative genome analysis of the high pathogenicity Yersinia enterocolitica strain 8081.</title>
        <authorList>
            <person name="Thomson N.R."/>
            <person name="Howard S."/>
            <person name="Wren B.W."/>
            <person name="Holden M.T.G."/>
            <person name="Crossman L."/>
            <person name="Challis G.L."/>
            <person name="Churcher C."/>
            <person name="Mungall K."/>
            <person name="Brooks K."/>
            <person name="Chillingworth T."/>
            <person name="Feltwell T."/>
            <person name="Abdellah Z."/>
            <person name="Hauser H."/>
            <person name="Jagels K."/>
            <person name="Maddison M."/>
            <person name="Moule S."/>
            <person name="Sanders M."/>
            <person name="Whitehead S."/>
            <person name="Quail M.A."/>
            <person name="Dougan G."/>
            <person name="Parkhill J."/>
            <person name="Prentice M.B."/>
        </authorList>
    </citation>
    <scope>NUCLEOTIDE SEQUENCE [LARGE SCALE GENOMIC DNA]</scope>
    <source>
        <strain>NCTC 13174 / 8081</strain>
    </source>
</reference>
<keyword id="KW-0963">Cytoplasm</keyword>
<keyword id="KW-0328">Glycosyltransferase</keyword>
<keyword id="KW-0660">Purine salvage</keyword>
<keyword id="KW-0808">Transferase</keyword>
<comment type="function">
    <text evidence="1">Catalyzes a salvage reaction resulting in the formation of AMP, that is energically less costly than de novo synthesis.</text>
</comment>
<comment type="catalytic activity">
    <reaction evidence="1">
        <text>AMP + diphosphate = 5-phospho-alpha-D-ribose 1-diphosphate + adenine</text>
        <dbReference type="Rhea" id="RHEA:16609"/>
        <dbReference type="ChEBI" id="CHEBI:16708"/>
        <dbReference type="ChEBI" id="CHEBI:33019"/>
        <dbReference type="ChEBI" id="CHEBI:58017"/>
        <dbReference type="ChEBI" id="CHEBI:456215"/>
        <dbReference type="EC" id="2.4.2.7"/>
    </reaction>
</comment>
<comment type="pathway">
    <text evidence="1">Purine metabolism; AMP biosynthesis via salvage pathway; AMP from adenine: step 1/1.</text>
</comment>
<comment type="subunit">
    <text evidence="1">Homodimer.</text>
</comment>
<comment type="subcellular location">
    <subcellularLocation>
        <location evidence="1">Cytoplasm</location>
    </subcellularLocation>
</comment>
<comment type="similarity">
    <text evidence="1">Belongs to the purine/pyrimidine phosphoribosyltransferase family.</text>
</comment>
<name>APT_YERE8</name>
<sequence length="187" mass="20068">MTATAPNTAQQLKYIKDSIKTIPDYPKAGILFRDVTSLLEDPLAYAASIELLTERYLDKGVTKVVGTEARGFLFGAPVALSLGVGFVPVRKPGKLPRATISESYELEYGTDKLEIHTDSIKPGDKVLVIDDLLATGGTIEATVKLIRKLGGEVTDAAFVINLPDLGGEARLNDQGITCYSLVDFSGH</sequence>
<organism>
    <name type="scientific">Yersinia enterocolitica serotype O:8 / biotype 1B (strain NCTC 13174 / 8081)</name>
    <dbReference type="NCBI Taxonomy" id="393305"/>
    <lineage>
        <taxon>Bacteria</taxon>
        <taxon>Pseudomonadati</taxon>
        <taxon>Pseudomonadota</taxon>
        <taxon>Gammaproteobacteria</taxon>
        <taxon>Enterobacterales</taxon>
        <taxon>Yersiniaceae</taxon>
        <taxon>Yersinia</taxon>
    </lineage>
</organism>
<dbReference type="EC" id="2.4.2.7" evidence="1"/>
<dbReference type="EMBL" id="AM286415">
    <property type="protein sequence ID" value="CAL13129.1"/>
    <property type="molecule type" value="Genomic_DNA"/>
</dbReference>
<dbReference type="RefSeq" id="WP_005167709.1">
    <property type="nucleotide sequence ID" value="NC_008800.1"/>
</dbReference>
<dbReference type="RefSeq" id="YP_001007276.1">
    <property type="nucleotide sequence ID" value="NC_008800.1"/>
</dbReference>
<dbReference type="SMR" id="A1JNC2"/>
<dbReference type="KEGG" id="yen:YE3094"/>
<dbReference type="PATRIC" id="fig|393305.7.peg.3292"/>
<dbReference type="eggNOG" id="COG0503">
    <property type="taxonomic scope" value="Bacteria"/>
</dbReference>
<dbReference type="HOGENOM" id="CLU_063339_3_0_6"/>
<dbReference type="OrthoDB" id="9803963at2"/>
<dbReference type="UniPathway" id="UPA00588">
    <property type="reaction ID" value="UER00646"/>
</dbReference>
<dbReference type="Proteomes" id="UP000000642">
    <property type="component" value="Chromosome"/>
</dbReference>
<dbReference type="GO" id="GO:0005829">
    <property type="term" value="C:cytosol"/>
    <property type="evidence" value="ECO:0007669"/>
    <property type="project" value="TreeGrafter"/>
</dbReference>
<dbReference type="GO" id="GO:0003999">
    <property type="term" value="F:adenine phosphoribosyltransferase activity"/>
    <property type="evidence" value="ECO:0007669"/>
    <property type="project" value="UniProtKB-UniRule"/>
</dbReference>
<dbReference type="GO" id="GO:0006168">
    <property type="term" value="P:adenine salvage"/>
    <property type="evidence" value="ECO:0007669"/>
    <property type="project" value="InterPro"/>
</dbReference>
<dbReference type="GO" id="GO:0044209">
    <property type="term" value="P:AMP salvage"/>
    <property type="evidence" value="ECO:0007669"/>
    <property type="project" value="UniProtKB-UniRule"/>
</dbReference>
<dbReference type="GO" id="GO:0006166">
    <property type="term" value="P:purine ribonucleoside salvage"/>
    <property type="evidence" value="ECO:0007669"/>
    <property type="project" value="UniProtKB-KW"/>
</dbReference>
<dbReference type="CDD" id="cd06223">
    <property type="entry name" value="PRTases_typeI"/>
    <property type="match status" value="1"/>
</dbReference>
<dbReference type="FunFam" id="3.40.50.2020:FF:000004">
    <property type="entry name" value="Adenine phosphoribosyltransferase"/>
    <property type="match status" value="1"/>
</dbReference>
<dbReference type="Gene3D" id="3.40.50.2020">
    <property type="match status" value="1"/>
</dbReference>
<dbReference type="HAMAP" id="MF_00004">
    <property type="entry name" value="Aden_phosphoribosyltr"/>
    <property type="match status" value="1"/>
</dbReference>
<dbReference type="InterPro" id="IPR005764">
    <property type="entry name" value="Ade_phspho_trans"/>
</dbReference>
<dbReference type="InterPro" id="IPR050120">
    <property type="entry name" value="Adenine_PRTase"/>
</dbReference>
<dbReference type="InterPro" id="IPR000836">
    <property type="entry name" value="PRibTrfase_dom"/>
</dbReference>
<dbReference type="InterPro" id="IPR029057">
    <property type="entry name" value="PRTase-like"/>
</dbReference>
<dbReference type="NCBIfam" id="TIGR01090">
    <property type="entry name" value="apt"/>
    <property type="match status" value="1"/>
</dbReference>
<dbReference type="NCBIfam" id="NF002632">
    <property type="entry name" value="PRK02304.1-1"/>
    <property type="match status" value="1"/>
</dbReference>
<dbReference type="NCBIfam" id="NF002633">
    <property type="entry name" value="PRK02304.1-2"/>
    <property type="match status" value="1"/>
</dbReference>
<dbReference type="NCBIfam" id="NF002634">
    <property type="entry name" value="PRK02304.1-3"/>
    <property type="match status" value="1"/>
</dbReference>
<dbReference type="NCBIfam" id="NF002636">
    <property type="entry name" value="PRK02304.1-5"/>
    <property type="match status" value="1"/>
</dbReference>
<dbReference type="PANTHER" id="PTHR11776">
    <property type="entry name" value="ADENINE PHOSPHORIBOSYLTRANSFERASE"/>
    <property type="match status" value="1"/>
</dbReference>
<dbReference type="PANTHER" id="PTHR11776:SF7">
    <property type="entry name" value="PHOSPHORIBOSYLTRANSFERASE DOMAIN-CONTAINING PROTEIN"/>
    <property type="match status" value="1"/>
</dbReference>
<dbReference type="Pfam" id="PF00156">
    <property type="entry name" value="Pribosyltran"/>
    <property type="match status" value="1"/>
</dbReference>
<dbReference type="SUPFAM" id="SSF53271">
    <property type="entry name" value="PRTase-like"/>
    <property type="match status" value="1"/>
</dbReference>
<dbReference type="PROSITE" id="PS00103">
    <property type="entry name" value="PUR_PYR_PR_TRANSFER"/>
    <property type="match status" value="1"/>
</dbReference>
<evidence type="ECO:0000255" key="1">
    <source>
        <dbReference type="HAMAP-Rule" id="MF_00004"/>
    </source>
</evidence>
<proteinExistence type="inferred from homology"/>